<keyword id="KW-0025">Alternative splicing</keyword>
<keyword id="KW-0067">ATP-binding</keyword>
<keyword id="KW-1003">Cell membrane</keyword>
<keyword id="KW-0221">Differentiation</keyword>
<keyword id="KW-0325">Glycoprotein</keyword>
<keyword id="KW-0472">Membrane</keyword>
<keyword id="KW-0547">Nucleotide-binding</keyword>
<keyword id="KW-1267">Proteomics identification</keyword>
<keyword id="KW-1185">Reference proteome</keyword>
<keyword id="KW-0677">Repeat</keyword>
<keyword id="KW-1278">Translocase</keyword>
<keyword id="KW-0812">Transmembrane</keyword>
<keyword id="KW-1133">Transmembrane helix</keyword>
<keyword id="KW-0813">Transport</keyword>
<gene>
    <name evidence="31" type="primary">ABCB5</name>
</gene>
<evidence type="ECO:0000250" key="1">
    <source>
        <dbReference type="UniProtKB" id="B5X0E4"/>
    </source>
</evidence>
<evidence type="ECO:0000255" key="2"/>
<evidence type="ECO:0000255" key="3">
    <source>
        <dbReference type="PROSITE-ProRule" id="PRU00434"/>
    </source>
</evidence>
<evidence type="ECO:0000255" key="4">
    <source>
        <dbReference type="PROSITE-ProRule" id="PRU00441"/>
    </source>
</evidence>
<evidence type="ECO:0000256" key="5">
    <source>
        <dbReference type="SAM" id="MobiDB-lite"/>
    </source>
</evidence>
<evidence type="ECO:0000269" key="6">
    <source>
    </source>
</evidence>
<evidence type="ECO:0000269" key="7">
    <source>
    </source>
</evidence>
<evidence type="ECO:0000269" key="8">
    <source>
    </source>
</evidence>
<evidence type="ECO:0000269" key="9">
    <source>
    </source>
</evidence>
<evidence type="ECO:0000269" key="10">
    <source>
    </source>
</evidence>
<evidence type="ECO:0000269" key="11">
    <source>
    </source>
</evidence>
<evidence type="ECO:0000269" key="12">
    <source>
    </source>
</evidence>
<evidence type="ECO:0000269" key="13">
    <source>
    </source>
</evidence>
<evidence type="ECO:0000269" key="14">
    <source>
    </source>
</evidence>
<evidence type="ECO:0000269" key="15">
    <source>
    </source>
</evidence>
<evidence type="ECO:0000269" key="16">
    <source>
    </source>
</evidence>
<evidence type="ECO:0000269" key="17">
    <source>
    </source>
</evidence>
<evidence type="ECO:0000269" key="18">
    <source>
    </source>
</evidence>
<evidence type="ECO:0000269" key="19">
    <source ref="5"/>
</evidence>
<evidence type="ECO:0000269" key="20">
    <source ref="8"/>
</evidence>
<evidence type="ECO:0000303" key="21">
    <source>
    </source>
</evidence>
<evidence type="ECO:0000303" key="22">
    <source>
    </source>
</evidence>
<evidence type="ECO:0000303" key="23">
    <source>
    </source>
</evidence>
<evidence type="ECO:0000303" key="24">
    <source>
    </source>
</evidence>
<evidence type="ECO:0000305" key="25"/>
<evidence type="ECO:0000305" key="26">
    <source>
    </source>
</evidence>
<evidence type="ECO:0000305" key="27">
    <source>
    </source>
</evidence>
<evidence type="ECO:0000305" key="28">
    <source>
    </source>
</evidence>
<evidence type="ECO:0000305" key="29">
    <source>
    </source>
</evidence>
<evidence type="ECO:0000305" key="30">
    <source>
    </source>
</evidence>
<evidence type="ECO:0000312" key="31">
    <source>
        <dbReference type="HGNC" id="HGNC:46"/>
    </source>
</evidence>
<accession>Q2M3G0</accession>
<accession>A4D131</accession>
<accession>A7BKA4</accession>
<accession>B5MD19</accession>
<accession>B7WPL1</accession>
<accession>F8QQP8</accession>
<accession>F8QQP9</accession>
<accession>J3KQ04</accession>
<accession>Q2M3I5</accession>
<accession>Q5I5Q7</accession>
<accession>Q5I5Q8</accession>
<accession>Q6KG50</accession>
<accession>Q6XFQ5</accession>
<accession>Q8IXA1</accession>
<sequence length="1257" mass="138641">MENSERAEEMQENYQRNGTAEEQPKLRKEAVGSIEIFRFADGLDITLMILGILASLVNGACLPLMPLVLGEMSDNLISGCLVQTNTTNYQNCTQSQEKLNEDMTLLTLYYVGIGVAALIFGYIQISLWIITAARQTKRIRKQFFHSVLAQDIGWFDSCDIGELNTRMTDDIDKISDGIGDKIALLFQNMSTFSIGLAVGLVKGWKLTLVTLSTSPLIMASAAACSRMVISLTSKELSAYSKAGAVAEEVLSSIRTVIAFRAQEKELQRYTQNLKDAKDFGIKRTIASKVSLGAVYFFMNGTYGLAFWYGTSLILNGEPGYTIGTVLAVFFSVIHSSYCIGAAVPHFETFAIARGAAFHIFQVIDKKPSIDNFSTAGYKPESIEGTVEFKNVSFNYPSRPSIKILKGLNLRIKSGETVALVGLNGSGKSTVVQLLQRLYDPDDGFIMVDENDIRALNVRHYRDHIGVVSQEPVLFGTTISNNIKYGRDDVTDEEMERAAREANAYDFIMEFPNKFNTLVGEKGAQMSGGQKQRIAIARALVRNPKILILDEATSALDSESKSAVQAALEKASKGRTTIVVAHRLSTIRSADLIVTLKDGMLAEKGAHAELMAKRGLYYSLVMSQDIKKADEQMESMTYSTERKTNSLPLHSVKSIKSDFIDKAEESTQSKEISLPEVSLLKILKLNKPEWPFVVLGTLASVLNGTVHPVFSIIFAKIITMFGNNDKTTLKHDAEIYSMIFVILGVICFVSYFMQGLFYGRAGEILTMRLRHLAFKAMLYQDIAWFDEKENSTGGLTTILAIDIAQIQGATGSRIGVLTQNATNMGLSVIISFIYGWEMTFLILSIAPVLAVTGMIETAAMTGFANKDKQELKHAGKIATEALENIRTIVSLTREKAFEQMYEEMLQTQHRNTSKKAQIIGSCYAFSHAFIYFAYAAGFRFGAYLIQAGRMTPEGMFIVFTAIAYGAMAIGETLVLAPEYSKAKSGAAHLFALLEKKPNIDSRSQEGKKPDTCEGNLEFREVSFFYPCRPDVFILRGLSLSIERGKTVAFVGSSGCGKSTSVQLLQRLYDPVQGQVLFDGVDAKELNVQWLRSQIAIVPQEPVLFNCSIAENIAYGDNSRVVPLDEIKEAANAANIHSFIEGLPEKYNTQVGLKGAQLSGGQKQRLAIARALLQKPKILLLDEATSALDNDSEKVVQHALDKARTGRTCLVVTHRLSAIQNADLIVVLHNGKIKEQGTHQELLRNRDIYFKLVNAQSVQ</sequence>
<comment type="function">
    <text evidence="1 6 7 9 13">Energy-dependent efflux transporter responsible for decreased drug accumulation in multidrug-resistant cells (PubMed:12960149, PubMed:15205344, PubMed:15899824, PubMed:22306008). Specifically present in limbal stem cells, where it plays a key role in corneal development and repair (By similarity).</text>
</comment>
<comment type="catalytic activity">
    <reaction evidence="13">
        <text>daunorubicin(in) + ATP + H2O = daunorubicin(out) + ADP + phosphate + H(+)</text>
        <dbReference type="Rhea" id="RHEA:33147"/>
        <dbReference type="ChEBI" id="CHEBI:15377"/>
        <dbReference type="ChEBI" id="CHEBI:15378"/>
        <dbReference type="ChEBI" id="CHEBI:30616"/>
        <dbReference type="ChEBI" id="CHEBI:43474"/>
        <dbReference type="ChEBI" id="CHEBI:64677"/>
        <dbReference type="ChEBI" id="CHEBI:456216"/>
        <dbReference type="EC" id="7.6.2.2"/>
    </reaction>
    <physiologicalReaction direction="left-to-right" evidence="13">
        <dbReference type="Rhea" id="RHEA:33148"/>
    </physiologicalReaction>
</comment>
<comment type="subcellular location">
    <subcellularLocation>
        <location evidence="6">Cell membrane</location>
        <topology evidence="4 6">Multi-pass membrane protein</topology>
    </subcellularLocation>
</comment>
<comment type="alternative products">
    <event type="alternative splicing"/>
    <isoform>
        <id>Q2M3G0-4</id>
        <name>4</name>
        <sequence type="displayed"/>
    </isoform>
    <isoform>
        <id>Q2M3G0-2</id>
        <name>2</name>
        <name>ABCB5alpha</name>
        <sequence type="described" ref="VSP_056752 VSP_056753 VSP_056756"/>
    </isoform>
    <isoform>
        <id>Q2M3G0-3</id>
        <name>3</name>
        <sequence type="described" ref="VSP_056752 VSP_056754 VSP_056755"/>
    </isoform>
    <isoform>
        <id>Q2M3G0-1</id>
        <name>1</name>
        <name>ABCB5beta</name>
        <sequence type="described" ref="VSP_056752"/>
    </isoform>
</comment>
<comment type="tissue specificity">
    <text evidence="6 8 12 14 15 16 17 18">Expressed by CD133-expressing progenitor cells among epidermal melanocytes (at protein level). Widely expressed with specific expression in pigment cells. Highly expressed in several malignant tissues: highly expressed in clinical melanomas, with low expression in normal skin. In melanoma, marks malignant melanoma-initiating cells (MMIC), in which clinical virulence resides as a consequence of unlimited self-renewal capacity, resulting in inexorable tumor progression and metastasis. Also highly expressed in a number of leukemia cells. Expressed in basal limbal epithelium.</text>
</comment>
<comment type="miscellaneous">
    <text evidence="26 27 28 29 30">Acts as a marker of stem-like cells (CSC) in a number of malignancies (PubMed:24934811). Associated with clinical drug resistance, tumor progression and disease recurrence in malignant melanoma and acute leukemias. Responsible for the resistance to doxorubicin of a subset of malignant melanomas. ABCB5-expressing cells selectively survive when exposed to dacarbazine drug, the reference treatment of metastatic melanoma, vemurafenib and other various chemotherapeutic drugs, suggesting that anti-melanoma chemotherapy participates in the chemoresistance acquisition by selecting tumor cell subpopulations expressing ABCB5 (PubMed:22044138, PubMed:22675422, PubMed:22784549, PubMed:23770371, PubMed:24934811). Present in melanoma-initiating cells that acts as an enhancer of tumor growth by promoting CSC maintenance and tumor growth by controlling IL-1beta (IL1B) secretion to maintain slow-cycling, chemoresistant cells through an IL-1beta (IL1B)/IL8/CXCR1 cytokine signaling circuit (PubMed:24934811).</text>
</comment>
<comment type="similarity">
    <text evidence="25">Belongs to the ABC transporter superfamily. ABCB family. Multidrug resistance exporter (TC 3.A.1.201) subfamily.</text>
</comment>
<comment type="caution">
    <text evidence="25">Was named ABCB1 by some authors.</text>
</comment>
<comment type="sequence caution" evidence="25">
    <conflict type="erroneous initiation">
        <sequence resource="EMBL-CDS" id="AAN76500"/>
    </conflict>
    <text>Truncated N-terminus.</text>
</comment>
<comment type="sequence caution" evidence="25">
    <conflict type="erroneous initiation">
        <sequence resource="EMBL-CDS" id="AAQ03033"/>
    </conflict>
    <text>Extended N-terminus.</text>
</comment>
<comment type="online information" name="Atlas of Genetics and Cytogenetics in Oncology and Haematology">
    <link uri="https://atlasgeneticsoncology.org/gene/44305/ABCB5"/>
</comment>
<feature type="chain" id="PRO_0000253575" description="ATP-binding cassette sub-family B member 5">
    <location>
        <begin position="1"/>
        <end position="1257"/>
    </location>
</feature>
<feature type="transmembrane region" description="Helical" evidence="4">
    <location>
        <begin position="49"/>
        <end position="69"/>
    </location>
</feature>
<feature type="transmembrane region" description="Helical" evidence="4">
    <location>
        <begin position="110"/>
        <end position="130"/>
    </location>
</feature>
<feature type="transmembrane region" description="Helical" evidence="4">
    <location>
        <begin position="181"/>
        <end position="201"/>
    </location>
</feature>
<feature type="transmembrane region" description="Helical" evidence="4">
    <location>
        <begin position="203"/>
        <end position="223"/>
    </location>
</feature>
<feature type="transmembrane region" description="Helical" evidence="4">
    <location>
        <begin position="294"/>
        <end position="314"/>
    </location>
</feature>
<feature type="transmembrane region" description="Helical" evidence="4">
    <location>
        <begin position="322"/>
        <end position="342"/>
    </location>
</feature>
<feature type="transmembrane region" description="Helical" evidence="4">
    <location>
        <begin position="693"/>
        <end position="713"/>
    </location>
</feature>
<feature type="transmembrane region" description="Helical" evidence="4">
    <location>
        <begin position="737"/>
        <end position="757"/>
    </location>
</feature>
<feature type="transmembrane region" description="Helical" evidence="4">
    <location>
        <begin position="827"/>
        <end position="847"/>
    </location>
</feature>
<feature type="transmembrane region" description="Helical" evidence="4">
    <location>
        <begin position="917"/>
        <end position="937"/>
    </location>
</feature>
<feature type="transmembrane region" description="Helical" evidence="4">
    <location>
        <begin position="954"/>
        <end position="974"/>
    </location>
</feature>
<feature type="domain" description="ABC transmembrane type-1 1" evidence="4">
    <location>
        <begin position="49"/>
        <end position="350"/>
    </location>
</feature>
<feature type="domain" description="ABC transporter 1" evidence="3">
    <location>
        <begin position="386"/>
        <end position="622"/>
    </location>
</feature>
<feature type="domain" description="ABC transmembrane type-1 2" evidence="4">
    <location>
        <begin position="693"/>
        <end position="980"/>
    </location>
</feature>
<feature type="domain" description="ABC transporter 2" evidence="3">
    <location>
        <begin position="1015"/>
        <end position="1253"/>
    </location>
</feature>
<feature type="region of interest" description="Disordered" evidence="5">
    <location>
        <begin position="1"/>
        <end position="24"/>
    </location>
</feature>
<feature type="binding site" evidence="3">
    <location>
        <begin position="421"/>
        <end position="428"/>
    </location>
    <ligand>
        <name>ATP</name>
        <dbReference type="ChEBI" id="CHEBI:30616"/>
    </ligand>
</feature>
<feature type="binding site" evidence="3">
    <location>
        <begin position="1050"/>
        <end position="1057"/>
    </location>
    <ligand>
        <name>ATP</name>
        <dbReference type="ChEBI" id="CHEBI:30616"/>
    </ligand>
</feature>
<feature type="glycosylation site" description="N-linked (GlcNAc...) asparagine" evidence="2">
    <location>
        <position position="17"/>
    </location>
</feature>
<feature type="glycosylation site" description="N-linked (GlcNAc...) asparagine" evidence="2">
    <location>
        <position position="85"/>
    </location>
</feature>
<feature type="glycosylation site" description="N-linked (GlcNAc...) asparagine" evidence="2">
    <location>
        <position position="91"/>
    </location>
</feature>
<feature type="glycosylation site" description="N-linked (GlcNAc...) asparagine" evidence="2">
    <location>
        <position position="371"/>
    </location>
</feature>
<feature type="glycosylation site" description="N-linked (GlcNAc...) asparagine" evidence="2">
    <location>
        <position position="390"/>
    </location>
</feature>
<feature type="glycosylation site" description="N-linked (GlcNAc...) asparagine" evidence="2">
    <location>
        <position position="423"/>
    </location>
</feature>
<feature type="glycosylation site" description="N-linked (GlcNAc...) asparagine" evidence="2">
    <location>
        <position position="789"/>
    </location>
</feature>
<feature type="glycosylation site" description="N-linked (GlcNAc...) asparagine" evidence="2">
    <location>
        <position position="819"/>
    </location>
</feature>
<feature type="glycosylation site" description="N-linked (GlcNAc...) asparagine" evidence="2">
    <location>
        <position position="910"/>
    </location>
</feature>
<feature type="glycosylation site" description="N-linked (GlcNAc...) asparagine" evidence="2">
    <location>
        <position position="1104"/>
    </location>
</feature>
<feature type="glycosylation site" description="N-linked (GlcNAc...) asparagine" evidence="2">
    <location>
        <position position="1188"/>
    </location>
</feature>
<feature type="splice variant" id="VSP_056752" description="In isoform 1, isoform 2 and isoform 3." evidence="21 22 23 24">
    <location>
        <begin position="1"/>
        <end position="445"/>
    </location>
</feature>
<feature type="splice variant" id="VSP_056753" description="In isoform 2." evidence="23">
    <original>ASKGRTT</original>
    <variation>DTPRYSF</variation>
    <location>
        <begin position="570"/>
        <end position="576"/>
    </location>
</feature>
<feature type="splice variant" id="VSP_056754" description="In isoform 3." evidence="22">
    <original>AS</original>
    <variation>KK</variation>
    <location>
        <begin position="570"/>
        <end position="571"/>
    </location>
</feature>
<feature type="splice variant" id="VSP_056755" description="In isoform 3." evidence="22">
    <location>
        <begin position="572"/>
        <end position="1257"/>
    </location>
</feature>
<feature type="splice variant" id="VSP_056756" description="In isoform 2." evidence="23">
    <location>
        <begin position="577"/>
        <end position="1257"/>
    </location>
</feature>
<feature type="sequence variant" id="VAR_028387" description="In dbSNP:rs2301641." evidence="8">
    <original>K</original>
    <variation>E</variation>
    <location>
        <position position="560"/>
    </location>
</feature>
<feature type="sequence variant" id="VAR_028388" description="In dbSNP:rs13222448.">
    <original>K</original>
    <variation>R</variation>
    <location>
        <position position="669"/>
    </location>
</feature>
<feature type="sequence variant" id="VAR_035731" description="In a colorectal cancer sample; somatic mutation." evidence="10">
    <original>E</original>
    <variation>V</variation>
    <location>
        <position position="675"/>
    </location>
</feature>
<feature type="sequence variant" id="VAR_062662" description="In a pancreatic ductal adenocarcinoma sample; somatic mutation; dbSNP:rs1187237313." evidence="11">
    <original>A</original>
    <variation>T</variation>
    <location>
        <position position="880"/>
    </location>
</feature>
<feature type="sequence variant" id="VAR_033456" description="In dbSNP:rs35885925.">
    <original>Q</original>
    <variation>H</variation>
    <location>
        <position position="905"/>
    </location>
</feature>
<feature type="sequence variant" id="VAR_028389" description="In dbSNP:rs17143304.">
    <original>A</original>
    <variation>T</variation>
    <location>
        <position position="915"/>
    </location>
</feature>
<feature type="sequence variant" id="VAR_028390" description="In dbSNP:rs6461515." evidence="6 8 13 19 20">
    <original>E</original>
    <variation>K</variation>
    <location>
        <position position="970"/>
    </location>
</feature>
<feature type="sequence conflict" description="In Ref. 1; AAN76500." evidence="25" ref="1">
    <original>I</original>
    <variation>M</variation>
    <location>
        <position position="577"/>
    </location>
</feature>
<feature type="sequence conflict" description="In Ref. 2; AAW31630." evidence="25" ref="2">
    <original>L</original>
    <variation>P</variation>
    <location>
        <position position="1141"/>
    </location>
</feature>
<feature type="sequence conflict" description="In Ref. 3; ADV32637." evidence="25" ref="3">
    <original>L</original>
    <variation>I</variation>
    <location>
        <position position="1186"/>
    </location>
</feature>
<proteinExistence type="evidence at protein level"/>
<protein>
    <recommendedName>
        <fullName evidence="25">ATP-binding cassette sub-family B member 5</fullName>
    </recommendedName>
    <alternativeName>
        <fullName>ABCB5 P-gp</fullName>
    </alternativeName>
    <alternativeName>
        <fullName>P-glycoprotein ABCB5</fullName>
        <ecNumber evidence="13">7.6.2.2</ecNumber>
    </alternativeName>
</protein>
<name>ABCB5_HUMAN</name>
<reference key="1">
    <citation type="journal article" date="2003" name="J. Biol. Chem.">
        <title>Regulation of progenitor cell fusion by ABCB5 P-glycoprotein, a novel human ATP-binding cassette transporter.</title>
        <authorList>
            <person name="Frank N.Y."/>
            <person name="Pendse S.S."/>
            <person name="Lapchak P.H."/>
            <person name="Margaryan A."/>
            <person name="Shlain D."/>
            <person name="Doeing C."/>
            <person name="Sayegh M.H."/>
            <person name="Frank M.H."/>
        </authorList>
    </citation>
    <scope>NUCLEOTIDE SEQUENCE [MRNA] (ISOFORM 1)</scope>
    <scope>FUNCTION</scope>
    <scope>SUBCELLULAR LOCATION</scope>
    <scope>TISSUE SPECIFICITY</scope>
    <scope>VARIANT LYS-970</scope>
    <source>
        <tissue>Melanocyte</tissue>
        <tissue>Melanoma</tissue>
    </source>
</reference>
<reference key="2">
    <citation type="journal article" date="2005" name="Pigment Cell Res.">
        <title>Principal expression of two mRNA isoforms (ABCB 5alpha and ABCB 5beta) of the ATP-binding cassette transporter gene ABCB 5 in melanoma cells and melanocytes.</title>
        <authorList>
            <person name="Chen K.G."/>
            <person name="Szakacs G."/>
            <person name="Annereau J.-P."/>
            <person name="Rouzaud F."/>
            <person name="Liang X.-J."/>
            <person name="Valencia J.C."/>
            <person name="Nagineni C.N."/>
            <person name="Hooks J.J."/>
            <person name="Hearing V.J."/>
            <person name="Gottesman M.M."/>
        </authorList>
    </citation>
    <scope>NUCLEOTIDE SEQUENCE [MRNA] (ISOFORMS 1 AND 2)</scope>
    <scope>VARIANTS GLU-560 AND LYS-970</scope>
    <scope>TISSUE SPECIFICITY</scope>
    <source>
        <tissue>Melanoma</tissue>
    </source>
</reference>
<reference key="3">
    <citation type="journal article" date="2011" name="Cancer Res.">
        <title>ABCB5 identifies a therapy-refractory tumor cell population in colorectal cancer patients.</title>
        <authorList>
            <person name="Wilson B.J."/>
            <person name="Schatton T."/>
            <person name="Zhan Q."/>
            <person name="Gasser M."/>
            <person name="Ma J."/>
            <person name="Saab K.R."/>
            <person name="Schanche R."/>
            <person name="Waaga-Gasser A.M."/>
            <person name="Gold J.S."/>
            <person name="Huang Q."/>
            <person name="Murphy G.F."/>
            <person name="Frank M.H."/>
            <person name="Frank N.Y."/>
        </authorList>
    </citation>
    <scope>NUCLEOTIDE SEQUENCE [MRNA] (ISOFORM 1)</scope>
    <source>
        <tissue>Colon adenocarcinoma</tissue>
    </source>
</reference>
<reference key="4">
    <citation type="journal article" date="2012" name="Biochem. Biophys. Res. Commun.">
        <title>Expression of human ABCB5 confers resistance to taxanes and anthracyclines.</title>
        <authorList>
            <person name="Kawanobe T."/>
            <person name="Kogure S."/>
            <person name="Nakamura S."/>
            <person name="Sato M."/>
            <person name="Katayama K."/>
            <person name="Mitsuhashi J."/>
            <person name="Noguchi K."/>
            <person name="Sugimoto Y."/>
        </authorList>
    </citation>
    <scope>NUCLEOTIDE SEQUENCE [MRNA] (ISOFORM 4)</scope>
    <scope>FUNCTION</scope>
    <scope>VARIANT LYS-970</scope>
    <scope>CATALYTIC ACTIVITY</scope>
    <source>
        <tissue>Prostate</tissue>
        <tissue>Testis</tissue>
    </source>
</reference>
<reference key="5">
    <citation type="submission" date="2003-02" db="EMBL/GenBank/DDBJ databases">
        <authorList>
            <person name="Meij I.C."/>
            <person name="van Aubel R."/>
            <person name="Tammur J."/>
            <person name="Dean M."/>
            <person name="Russel F.G."/>
            <person name="Allikmets R."/>
            <person name="Cremers F.P.M."/>
        </authorList>
    </citation>
    <scope>NUCLEOTIDE SEQUENCE [MRNA] (ISOFORM 4)</scope>
    <scope>VARIANT LYS-970</scope>
</reference>
<reference key="6">
    <citation type="journal article" date="2003" name="Nature">
        <title>The DNA sequence of human chromosome 7.</title>
        <authorList>
            <person name="Hillier L.W."/>
            <person name="Fulton R.S."/>
            <person name="Fulton L.A."/>
            <person name="Graves T.A."/>
            <person name="Pepin K.H."/>
            <person name="Wagner-McPherson C."/>
            <person name="Layman D."/>
            <person name="Maas J."/>
            <person name="Jaeger S."/>
            <person name="Walker R."/>
            <person name="Wylie K."/>
            <person name="Sekhon M."/>
            <person name="Becker M.C."/>
            <person name="O'Laughlin M.D."/>
            <person name="Schaller M.E."/>
            <person name="Fewell G.A."/>
            <person name="Delehaunty K.D."/>
            <person name="Miner T.L."/>
            <person name="Nash W.E."/>
            <person name="Cordes M."/>
            <person name="Du H."/>
            <person name="Sun H."/>
            <person name="Edwards J."/>
            <person name="Bradshaw-Cordum H."/>
            <person name="Ali J."/>
            <person name="Andrews S."/>
            <person name="Isak A."/>
            <person name="Vanbrunt A."/>
            <person name="Nguyen C."/>
            <person name="Du F."/>
            <person name="Lamar B."/>
            <person name="Courtney L."/>
            <person name="Kalicki J."/>
            <person name="Ozersky P."/>
            <person name="Bielicki L."/>
            <person name="Scott K."/>
            <person name="Holmes A."/>
            <person name="Harkins R."/>
            <person name="Harris A."/>
            <person name="Strong C.M."/>
            <person name="Hou S."/>
            <person name="Tomlinson C."/>
            <person name="Dauphin-Kohlberg S."/>
            <person name="Kozlowicz-Reilly A."/>
            <person name="Leonard S."/>
            <person name="Rohlfing T."/>
            <person name="Rock S.M."/>
            <person name="Tin-Wollam A.-M."/>
            <person name="Abbott A."/>
            <person name="Minx P."/>
            <person name="Maupin R."/>
            <person name="Strowmatt C."/>
            <person name="Latreille P."/>
            <person name="Miller N."/>
            <person name="Johnson D."/>
            <person name="Murray J."/>
            <person name="Woessner J.P."/>
            <person name="Wendl M.C."/>
            <person name="Yang S.-P."/>
            <person name="Schultz B.R."/>
            <person name="Wallis J.W."/>
            <person name="Spieth J."/>
            <person name="Bieri T.A."/>
            <person name="Nelson J.O."/>
            <person name="Berkowicz N."/>
            <person name="Wohldmann P.E."/>
            <person name="Cook L.L."/>
            <person name="Hickenbotham M.T."/>
            <person name="Eldred J."/>
            <person name="Williams D."/>
            <person name="Bedell J.A."/>
            <person name="Mardis E.R."/>
            <person name="Clifton S.W."/>
            <person name="Chissoe S.L."/>
            <person name="Marra M.A."/>
            <person name="Raymond C."/>
            <person name="Haugen E."/>
            <person name="Gillett W."/>
            <person name="Zhou Y."/>
            <person name="James R."/>
            <person name="Phelps K."/>
            <person name="Iadanoto S."/>
            <person name="Bubb K."/>
            <person name="Simms E."/>
            <person name="Levy R."/>
            <person name="Clendenning J."/>
            <person name="Kaul R."/>
            <person name="Kent W.J."/>
            <person name="Furey T.S."/>
            <person name="Baertsch R.A."/>
            <person name="Brent M.R."/>
            <person name="Keibler E."/>
            <person name="Flicek P."/>
            <person name="Bork P."/>
            <person name="Suyama M."/>
            <person name="Bailey J.A."/>
            <person name="Portnoy M.E."/>
            <person name="Torrents D."/>
            <person name="Chinwalla A.T."/>
            <person name="Gish W.R."/>
            <person name="Eddy S.R."/>
            <person name="McPherson J.D."/>
            <person name="Olson M.V."/>
            <person name="Eichler E.E."/>
            <person name="Green E.D."/>
            <person name="Waterston R.H."/>
            <person name="Wilson R.K."/>
        </authorList>
    </citation>
    <scope>NUCLEOTIDE SEQUENCE [LARGE SCALE GENOMIC DNA]</scope>
</reference>
<reference key="7">
    <citation type="journal article" date="2003" name="Science">
        <title>Human chromosome 7: DNA sequence and biology.</title>
        <authorList>
            <person name="Scherer S.W."/>
            <person name="Cheung J."/>
            <person name="MacDonald J.R."/>
            <person name="Osborne L.R."/>
            <person name="Nakabayashi K."/>
            <person name="Herbrick J.-A."/>
            <person name="Carson A.R."/>
            <person name="Parker-Katiraee L."/>
            <person name="Skaug J."/>
            <person name="Khaja R."/>
            <person name="Zhang J."/>
            <person name="Hudek A.K."/>
            <person name="Li M."/>
            <person name="Haddad M."/>
            <person name="Duggan G.E."/>
            <person name="Fernandez B.A."/>
            <person name="Kanematsu E."/>
            <person name="Gentles S."/>
            <person name="Christopoulos C.C."/>
            <person name="Choufani S."/>
            <person name="Kwasnicka D."/>
            <person name="Zheng X.H."/>
            <person name="Lai Z."/>
            <person name="Nusskern D.R."/>
            <person name="Zhang Q."/>
            <person name="Gu Z."/>
            <person name="Lu F."/>
            <person name="Zeesman S."/>
            <person name="Nowaczyk M.J."/>
            <person name="Teshima I."/>
            <person name="Chitayat D."/>
            <person name="Shuman C."/>
            <person name="Weksberg R."/>
            <person name="Zackai E.H."/>
            <person name="Grebe T.A."/>
            <person name="Cox S.R."/>
            <person name="Kirkpatrick S.J."/>
            <person name="Rahman N."/>
            <person name="Friedman J.M."/>
            <person name="Heng H.H.Q."/>
            <person name="Pelicci P.G."/>
            <person name="Lo-Coco F."/>
            <person name="Belloni E."/>
            <person name="Shaffer L.G."/>
            <person name="Pober B."/>
            <person name="Morton C.C."/>
            <person name="Gusella J.F."/>
            <person name="Bruns G.A.P."/>
            <person name="Korf B.R."/>
            <person name="Quade B.J."/>
            <person name="Ligon A.H."/>
            <person name="Ferguson H."/>
            <person name="Higgins A.W."/>
            <person name="Leach N.T."/>
            <person name="Herrick S.R."/>
            <person name="Lemyre E."/>
            <person name="Farra C.G."/>
            <person name="Kim H.-G."/>
            <person name="Summers A.M."/>
            <person name="Gripp K.W."/>
            <person name="Roberts W."/>
            <person name="Szatmari P."/>
            <person name="Winsor E.J.T."/>
            <person name="Grzeschik K.-H."/>
            <person name="Teebi A."/>
            <person name="Minassian B.A."/>
            <person name="Kere J."/>
            <person name="Armengol L."/>
            <person name="Pujana M.A."/>
            <person name="Estivill X."/>
            <person name="Wilson M.D."/>
            <person name="Koop B.F."/>
            <person name="Tosi S."/>
            <person name="Moore G.E."/>
            <person name="Boright A.P."/>
            <person name="Zlotorynski E."/>
            <person name="Kerem B."/>
            <person name="Kroisel P.M."/>
            <person name="Petek E."/>
            <person name="Oscier D.G."/>
            <person name="Mould S.J."/>
            <person name="Doehner H."/>
            <person name="Doehner K."/>
            <person name="Rommens J.M."/>
            <person name="Vincent J.B."/>
            <person name="Venter J.C."/>
            <person name="Li P.W."/>
            <person name="Mural R.J."/>
            <person name="Adams M.D."/>
            <person name="Tsui L.-C."/>
        </authorList>
    </citation>
    <scope>NUCLEOTIDE SEQUENCE [LARGE SCALE GENOMIC DNA]</scope>
</reference>
<reference key="8">
    <citation type="submission" date="2005-07" db="EMBL/GenBank/DDBJ databases">
        <authorList>
            <person name="Mural R.J."/>
            <person name="Istrail S."/>
            <person name="Sutton G.G."/>
            <person name="Florea L."/>
            <person name="Halpern A.L."/>
            <person name="Mobarry C.M."/>
            <person name="Lippert R."/>
            <person name="Walenz B."/>
            <person name="Shatkay H."/>
            <person name="Dew I."/>
            <person name="Miller J.R."/>
            <person name="Flanigan M.J."/>
            <person name="Edwards N.J."/>
            <person name="Bolanos R."/>
            <person name="Fasulo D."/>
            <person name="Halldorsson B.V."/>
            <person name="Hannenhalli S."/>
            <person name="Turner R."/>
            <person name="Yooseph S."/>
            <person name="Lu F."/>
            <person name="Nusskern D.R."/>
            <person name="Shue B.C."/>
            <person name="Zheng X.H."/>
            <person name="Zhong F."/>
            <person name="Delcher A.L."/>
            <person name="Huson D.H."/>
            <person name="Kravitz S.A."/>
            <person name="Mouchard L."/>
            <person name="Reinert K."/>
            <person name="Remington K.A."/>
            <person name="Clark A.G."/>
            <person name="Waterman M.S."/>
            <person name="Eichler E.E."/>
            <person name="Adams M.D."/>
            <person name="Hunkapiller M.W."/>
            <person name="Myers E.W."/>
            <person name="Venter J.C."/>
        </authorList>
    </citation>
    <scope>NUCLEOTIDE SEQUENCE [LARGE SCALE GENOMIC DNA]</scope>
    <scope>VARIANT LYS-970</scope>
</reference>
<reference key="9">
    <citation type="journal article" date="2004" name="Genome Res.">
        <title>The status, quality, and expansion of the NIH full-length cDNA project: the Mammalian Gene Collection (MGC).</title>
        <authorList>
            <consortium name="The MGC Project Team"/>
        </authorList>
    </citation>
    <scope>NUCLEOTIDE SEQUENCE [LARGE SCALE MRNA] (ISOFORMS 1 AND 3)</scope>
    <source>
        <tissue>Melanoma</tissue>
    </source>
</reference>
<reference key="10">
    <citation type="journal article" date="2004" name="Cancer Res.">
        <title>Membrane transporters and channels: role of the transportome in cancer chemosensitivity and chemoresistance.</title>
        <authorList>
            <person name="Huang Y."/>
            <person name="Anderle P."/>
            <person name="Bussey K.J."/>
            <person name="Barbacioru C."/>
            <person name="Shankavaram U."/>
            <person name="Dai Z."/>
            <person name="Reinhold W.C."/>
            <person name="Papp A."/>
            <person name="Weinstein J.N."/>
            <person name="Sadee W."/>
        </authorList>
    </citation>
    <scope>FUNCTION</scope>
</reference>
<reference key="11">
    <citation type="journal article" date="2005" name="Cancer Res.">
        <title>ABCB5-mediated doxorubicin transport and chemoresistance in human malignant melanoma.</title>
        <authorList>
            <person name="Frank N.Y."/>
            <person name="Margaryan A."/>
            <person name="Huang Y."/>
            <person name="Schatton T."/>
            <person name="Waaga-Gasser A.M."/>
            <person name="Gasser M."/>
            <person name="Sayegh M.H."/>
            <person name="Sadee W."/>
            <person name="Frank M.H."/>
        </authorList>
    </citation>
    <scope>FUNCTION</scope>
</reference>
<reference key="12">
    <citation type="journal article" date="2012" name="Eur. J. Cancer">
        <title>ABCB5 expression and cancer stem cell hypothesis in oral squamous cell carcinoma.</title>
        <authorList>
            <person name="Grimm M."/>
            <person name="Krimmel M."/>
            <person name="Polligkeit J."/>
            <person name="Alexander D."/>
            <person name="Munz A."/>
            <person name="Kluba S."/>
            <person name="Keutel C."/>
            <person name="Hoffmann J."/>
            <person name="Reinert S."/>
            <person name="Hoefert S."/>
        </authorList>
    </citation>
    <scope>TISSUE SPECIFICITY</scope>
</reference>
<reference key="13">
    <citation type="journal article" date="2012" name="Leuk. Lymphoma">
        <title>Expression of ABCB5 gene in hematological malignances and its significance.</title>
        <authorList>
            <person name="Yang M."/>
            <person name="Li W."/>
            <person name="Fan D."/>
            <person name="Yan Y."/>
            <person name="Zhang X."/>
            <person name="Zhang Y."/>
            <person name="Xiong D."/>
        </authorList>
    </citation>
    <scope>TISSUE SPECIFICITY</scope>
</reference>
<reference key="14">
    <citation type="journal article" date="2012" name="PLoS ONE">
        <title>Melanoma chemotherapy leads to the selection of ABCB5-expressing cells.</title>
        <authorList>
            <person name="Chartrain M."/>
            <person name="Riond J."/>
            <person name="Stennevin A."/>
            <person name="Vandenberghe I."/>
            <person name="Gomes B."/>
            <person name="Lamant L."/>
            <person name="Meyer N."/>
            <person name="Gairin J.E."/>
            <person name="Guilbaud N."/>
            <person name="Annereau J.P."/>
        </authorList>
    </citation>
    <scope>TISSUE SPECIFICITY</scope>
</reference>
<reference key="15">
    <citation type="journal article" date="2013" name="Biochem. Biophys. Res. Commun.">
        <title>Genetically determined ABCB5 functionality correlates with pigmentation phenotype and melanoma risk.</title>
        <authorList>
            <person name="Lin J.Y."/>
            <person name="Zhang M."/>
            <person name="Schatton T."/>
            <person name="Wilson B.J."/>
            <person name="Alloo A."/>
            <person name="Ma J."/>
            <person name="Qureshi A.A."/>
            <person name="Frank N.Y."/>
            <person name="Han J."/>
            <person name="Frank M.H."/>
        </authorList>
    </citation>
    <scope>TISSUE SPECIFICITY</scope>
</reference>
<reference key="16">
    <citation type="journal article" date="2014" name="Cancer Res.">
        <title>ABCB5 maintains melanoma-initiating cells through a pro-inflammatory cytokine signaling circuit.</title>
        <authorList>
            <person name="Wilson B.J."/>
            <person name="Saab K.R."/>
            <person name="Ma J."/>
            <person name="Schatton T."/>
            <person name="Putz P."/>
            <person name="Zhan Q."/>
            <person name="Murphy G.F."/>
            <person name="Gasser M."/>
            <person name="Waaga-Gasser A.M."/>
            <person name="Frank N.Y."/>
            <person name="Frank M.H."/>
        </authorList>
    </citation>
    <scope>TISSUE SPECIFICITY</scope>
</reference>
<reference key="17">
    <citation type="journal article" date="2006" name="Science">
        <title>The consensus coding sequences of human breast and colorectal cancers.</title>
        <authorList>
            <person name="Sjoeblom T."/>
            <person name="Jones S."/>
            <person name="Wood L.D."/>
            <person name="Parsons D.W."/>
            <person name="Lin J."/>
            <person name="Barber T.D."/>
            <person name="Mandelker D."/>
            <person name="Leary R.J."/>
            <person name="Ptak J."/>
            <person name="Silliman N."/>
            <person name="Szabo S."/>
            <person name="Buckhaults P."/>
            <person name="Farrell C."/>
            <person name="Meeh P."/>
            <person name="Markowitz S.D."/>
            <person name="Willis J."/>
            <person name="Dawson D."/>
            <person name="Willson J.K.V."/>
            <person name="Gazdar A.F."/>
            <person name="Hartigan J."/>
            <person name="Wu L."/>
            <person name="Liu C."/>
            <person name="Parmigiani G."/>
            <person name="Park B.H."/>
            <person name="Bachman K.E."/>
            <person name="Papadopoulos N."/>
            <person name="Vogelstein B."/>
            <person name="Kinzler K.W."/>
            <person name="Velculescu V.E."/>
        </authorList>
    </citation>
    <scope>VARIANT [LARGE SCALE ANALYSIS] VAL-675</scope>
</reference>
<reference key="18">
    <citation type="journal article" date="2008" name="Science">
        <title>Core signaling pathways in human pancreatic cancers revealed by global genomic analyses.</title>
        <authorList>
            <person name="Jones S."/>
            <person name="Zhang X."/>
            <person name="Parsons D.W."/>
            <person name="Lin J.C."/>
            <person name="Leary R.J."/>
            <person name="Angenendt P."/>
            <person name="Mankoo P."/>
            <person name="Carter H."/>
            <person name="Kamiyama H."/>
            <person name="Jimeno A."/>
            <person name="Hong S.M."/>
            <person name="Fu B."/>
            <person name="Lin M.T."/>
            <person name="Calhoun E.S."/>
            <person name="Kamiyama M."/>
            <person name="Walter K."/>
            <person name="Nikolskaya T."/>
            <person name="Nikolsky Y."/>
            <person name="Hartigan J."/>
            <person name="Smith D.R."/>
            <person name="Hidalgo M."/>
            <person name="Leach S.D."/>
            <person name="Klein A.P."/>
            <person name="Jaffee E.M."/>
            <person name="Goggins M."/>
            <person name="Maitra A."/>
            <person name="Iacobuzio-Donahue C."/>
            <person name="Eshleman J.R."/>
            <person name="Kern S.E."/>
            <person name="Hruban R.H."/>
            <person name="Karchin R."/>
            <person name="Papadopoulos N."/>
            <person name="Parmigiani G."/>
            <person name="Vogelstein B."/>
            <person name="Velculescu V.E."/>
            <person name="Kinzler K.W."/>
        </authorList>
    </citation>
    <scope>VARIANT [LARGE SCALE ANALYSIS] THR-880</scope>
</reference>
<reference key="19">
    <citation type="journal article" date="2014" name="Nature">
        <title>ABCB5 is a limbal stem cell gene required for corneal development and repair.</title>
        <authorList>
            <person name="Ksander B.R."/>
            <person name="Kolovou P.E."/>
            <person name="Wilson B.J."/>
            <person name="Saab K.R."/>
            <person name="Guo Q."/>
            <person name="Ma J."/>
            <person name="McGuire S.P."/>
            <person name="Gregory M.S."/>
            <person name="Vincent W.J."/>
            <person name="Perez V.L."/>
            <person name="Cruz-Guilloty F."/>
            <person name="Kao W.W."/>
            <person name="Call M.K."/>
            <person name="Tucker B.A."/>
            <person name="Zhan Q."/>
            <person name="Murphy G.F."/>
            <person name="Lathrop K.L."/>
            <person name="Alt C."/>
            <person name="Mortensen L.J."/>
            <person name="Lin C.P."/>
            <person name="Zieske J.D."/>
            <person name="Frank M.H."/>
            <person name="Frank N.Y."/>
        </authorList>
    </citation>
    <scope>TISSUE SPECIFICITY</scope>
</reference>
<dbReference type="EC" id="7.6.2.2" evidence="13"/>
<dbReference type="EMBL" id="AF319622">
    <property type="protein sequence ID" value="AAN76500.1"/>
    <property type="status" value="ALT_INIT"/>
    <property type="molecule type" value="mRNA"/>
</dbReference>
<dbReference type="EMBL" id="AF399931">
    <property type="protein sequence ID" value="AAQ03033.1"/>
    <property type="status" value="ALT_INIT"/>
    <property type="molecule type" value="mRNA"/>
</dbReference>
<dbReference type="EMBL" id="AY090613">
    <property type="protein sequence ID" value="AAM09027.1"/>
    <property type="molecule type" value="mRNA"/>
</dbReference>
<dbReference type="EMBL" id="AY234788">
    <property type="protein sequence ID" value="AAO73470.1"/>
    <property type="molecule type" value="mRNA"/>
</dbReference>
<dbReference type="EMBL" id="AY851364">
    <property type="protein sequence ID" value="AAW31629.1"/>
    <property type="molecule type" value="mRNA"/>
</dbReference>
<dbReference type="EMBL" id="AY851365">
    <property type="protein sequence ID" value="AAW31630.1"/>
    <property type="molecule type" value="mRNA"/>
</dbReference>
<dbReference type="EMBL" id="GU437216">
    <property type="protein sequence ID" value="ADV32636.1"/>
    <property type="molecule type" value="mRNA"/>
</dbReference>
<dbReference type="EMBL" id="GU437217">
    <property type="protein sequence ID" value="ADV32637.1"/>
    <property type="molecule type" value="mRNA"/>
</dbReference>
<dbReference type="EMBL" id="AB353947">
    <property type="protein sequence ID" value="BAF75364.1"/>
    <property type="molecule type" value="mRNA"/>
</dbReference>
<dbReference type="EMBL" id="AY230001">
    <property type="protein sequence ID" value="AAP55848.1"/>
    <property type="molecule type" value="mRNA"/>
</dbReference>
<dbReference type="EMBL" id="AC002486">
    <property type="status" value="NOT_ANNOTATED_CDS"/>
    <property type="molecule type" value="Genomic_DNA"/>
</dbReference>
<dbReference type="EMBL" id="AC005060">
    <property type="status" value="NOT_ANNOTATED_CDS"/>
    <property type="molecule type" value="Genomic_DNA"/>
</dbReference>
<dbReference type="EMBL" id="CH236948">
    <property type="protein sequence ID" value="EAL24273.1"/>
    <property type="molecule type" value="Genomic_DNA"/>
</dbReference>
<dbReference type="EMBL" id="CH471073">
    <property type="protein sequence ID" value="EAW93726.1"/>
    <property type="molecule type" value="Genomic_DNA"/>
</dbReference>
<dbReference type="EMBL" id="BC104894">
    <property type="protein sequence ID" value="AAI04895.2"/>
    <property type="molecule type" value="mRNA"/>
</dbReference>
<dbReference type="EMBL" id="BC104920">
    <property type="protein sequence ID" value="AAI04921.1"/>
    <property type="molecule type" value="mRNA"/>
</dbReference>
<dbReference type="EMBL" id="BC110370">
    <property type="status" value="NOT_ANNOTATED_CDS"/>
    <property type="molecule type" value="mRNA"/>
</dbReference>
<dbReference type="CCDS" id="CCDS5371.1">
    <molecule id="Q2M3G0-1"/>
</dbReference>
<dbReference type="CCDS" id="CCDS55090.1">
    <molecule id="Q2M3G0-4"/>
</dbReference>
<dbReference type="CCDS" id="CCDS55091.1">
    <molecule id="Q2M3G0-2"/>
</dbReference>
<dbReference type="CCDS" id="CCDS55092.1">
    <molecule id="Q2M3G0-3"/>
</dbReference>
<dbReference type="RefSeq" id="NP_001157413.1">
    <molecule id="Q2M3G0-4"/>
    <property type="nucleotide sequence ID" value="NM_001163941.2"/>
</dbReference>
<dbReference type="RefSeq" id="NP_001157414.1">
    <molecule id="Q2M3G0-2"/>
    <property type="nucleotide sequence ID" value="NM_001163942.2"/>
</dbReference>
<dbReference type="RefSeq" id="NP_001157465.1">
    <molecule id="Q2M3G0-3"/>
    <property type="nucleotide sequence ID" value="NM_001163993.3"/>
</dbReference>
<dbReference type="RefSeq" id="NP_848654.3">
    <molecule id="Q2M3G0-1"/>
    <property type="nucleotide sequence ID" value="NM_178559.5"/>
</dbReference>
<dbReference type="RefSeq" id="XP_011513669.1">
    <property type="nucleotide sequence ID" value="XM_011515367.2"/>
</dbReference>
<dbReference type="SMR" id="Q2M3G0"/>
<dbReference type="BioGRID" id="131028">
    <property type="interactions" value="15"/>
</dbReference>
<dbReference type="FunCoup" id="Q2M3G0">
    <property type="interactions" value="77"/>
</dbReference>
<dbReference type="IntAct" id="Q2M3G0">
    <property type="interactions" value="3"/>
</dbReference>
<dbReference type="STRING" id="9606.ENSP00000384881"/>
<dbReference type="ChEMBL" id="CHEMBL1772928"/>
<dbReference type="DrugBank" id="DB06263">
    <property type="generic name" value="Amrubicin"/>
</dbReference>
<dbReference type="DrugBank" id="DB11591">
    <property type="generic name" value="Bilastine"/>
</dbReference>
<dbReference type="DrugBank" id="DB04851">
    <property type="generic name" value="Biricodar"/>
</dbReference>
<dbReference type="DrugBank" id="DB08870">
    <property type="generic name" value="Brentuximab vedotin"/>
</dbReference>
<dbReference type="DrugBank" id="DB12267">
    <property type="generic name" value="Brigatinib"/>
</dbReference>
<dbReference type="DrugBank" id="DB09183">
    <property type="generic name" value="Dasabuvir"/>
</dbReference>
<dbReference type="DrugBank" id="DB11943">
    <property type="generic name" value="Delafloxacin"/>
</dbReference>
<dbReference type="DrugBank" id="DB14067">
    <property type="generic name" value="Dofequidar"/>
</dbReference>
<dbReference type="DrugBank" id="DB00254">
    <property type="generic name" value="Doxycycline"/>
</dbReference>
<dbReference type="DrugBank" id="DB12010">
    <property type="generic name" value="Fostamatinib"/>
</dbReference>
<dbReference type="DrugBank" id="DB15275">
    <property type="generic name" value="Inavolisib"/>
</dbReference>
<dbReference type="DrugBank" id="DB00598">
    <property type="generic name" value="Labetalol"/>
</dbReference>
<dbReference type="DrugBank" id="DB04948">
    <property type="generic name" value="Lofexidine"/>
</dbReference>
<dbReference type="DrugBank" id="DB11691">
    <property type="generic name" value="Naldemedine"/>
</dbReference>
<dbReference type="DrugBank" id="DB11641">
    <property type="generic name" value="Vinflunine"/>
</dbReference>
<dbReference type="TCDB" id="3.A.1.201.13">
    <property type="family name" value="the atp-binding cassette (abc) superfamily"/>
</dbReference>
<dbReference type="TCDB" id="3.A.1.201.50">
    <property type="family name" value="the atp-binding cassette (abc) superfamily"/>
</dbReference>
<dbReference type="GlyCosmos" id="Q2M3G0">
    <property type="glycosylation" value="11 sites, No reported glycans"/>
</dbReference>
<dbReference type="GlyGen" id="Q2M3G0">
    <property type="glycosylation" value="11 sites, 1 N-linked glycan (1 site)"/>
</dbReference>
<dbReference type="iPTMnet" id="Q2M3G0"/>
<dbReference type="PhosphoSitePlus" id="Q2M3G0"/>
<dbReference type="BioMuta" id="ABCB5"/>
<dbReference type="DMDM" id="308153645"/>
<dbReference type="jPOST" id="Q2M3G0"/>
<dbReference type="MassIVE" id="Q2M3G0"/>
<dbReference type="PaxDb" id="9606-ENSP00000384881"/>
<dbReference type="PeptideAtlas" id="Q2M3G0"/>
<dbReference type="ProteomicsDB" id="61374">
    <molecule id="Q2M3G0-4"/>
</dbReference>
<dbReference type="ProteomicsDB" id="61375">
    <molecule id="Q2M3G0-2"/>
</dbReference>
<dbReference type="ProteomicsDB" id="6148"/>
<dbReference type="Antibodypedia" id="11940">
    <property type="antibodies" value="408 antibodies from 38 providers"/>
</dbReference>
<dbReference type="DNASU" id="340273"/>
<dbReference type="Ensembl" id="ENST00000258738.10">
    <molecule id="Q2M3G0-1"/>
    <property type="protein sequence ID" value="ENSP00000258738.6"/>
    <property type="gene ID" value="ENSG00000004846.17"/>
</dbReference>
<dbReference type="Ensembl" id="ENST00000404938.7">
    <molecule id="Q2M3G0-4"/>
    <property type="protein sequence ID" value="ENSP00000384881.2"/>
    <property type="gene ID" value="ENSG00000004846.17"/>
</dbReference>
<dbReference type="Ensembl" id="ENST00000406935.5">
    <molecule id="Q2M3G0-3"/>
    <property type="protein sequence ID" value="ENSP00000383899.1"/>
    <property type="gene ID" value="ENSG00000004846.17"/>
</dbReference>
<dbReference type="Ensembl" id="ENST00000443026.6">
    <molecule id="Q2M3G0-2"/>
    <property type="protein sequence ID" value="ENSP00000406730.2"/>
    <property type="gene ID" value="ENSG00000004846.17"/>
</dbReference>
<dbReference type="GeneID" id="340273"/>
<dbReference type="KEGG" id="hsa:340273"/>
<dbReference type="MANE-Select" id="ENST00000404938.7">
    <property type="protein sequence ID" value="ENSP00000384881.2"/>
    <property type="RefSeq nucleotide sequence ID" value="NM_001163941.2"/>
    <property type="RefSeq protein sequence ID" value="NP_001157413.1"/>
</dbReference>
<dbReference type="UCSC" id="uc003suv.4">
    <molecule id="Q2M3G0-4"/>
    <property type="organism name" value="human"/>
</dbReference>
<dbReference type="AGR" id="HGNC:46"/>
<dbReference type="CTD" id="340273"/>
<dbReference type="DisGeNET" id="340273"/>
<dbReference type="GeneCards" id="ABCB5"/>
<dbReference type="HGNC" id="HGNC:46">
    <property type="gene designation" value="ABCB5"/>
</dbReference>
<dbReference type="HPA" id="ENSG00000004846">
    <property type="expression patterns" value="Tissue enriched (epididymis)"/>
</dbReference>
<dbReference type="MalaCards" id="ABCB5"/>
<dbReference type="MIM" id="611785">
    <property type="type" value="gene"/>
</dbReference>
<dbReference type="neXtProt" id="NX_Q2M3G0"/>
<dbReference type="OpenTargets" id="ENSG00000004846"/>
<dbReference type="PharmGKB" id="PA24387"/>
<dbReference type="VEuPathDB" id="HostDB:ENSG00000004846"/>
<dbReference type="eggNOG" id="KOG0055">
    <property type="taxonomic scope" value="Eukaryota"/>
</dbReference>
<dbReference type="GeneTree" id="ENSGT00940000161340"/>
<dbReference type="HOGENOM" id="CLU_000604_1_9_1"/>
<dbReference type="InParanoid" id="Q2M3G0"/>
<dbReference type="OMA" id="WAFQSWV"/>
<dbReference type="OrthoDB" id="6500128at2759"/>
<dbReference type="PAN-GO" id="Q2M3G0">
    <property type="GO annotations" value="3 GO annotations based on evolutionary models"/>
</dbReference>
<dbReference type="PhylomeDB" id="Q2M3G0"/>
<dbReference type="TreeFam" id="TF105193"/>
<dbReference type="BRENDA" id="7.6.2.2">
    <property type="organism ID" value="2681"/>
</dbReference>
<dbReference type="PathwayCommons" id="Q2M3G0"/>
<dbReference type="Reactome" id="R-HSA-382556">
    <property type="pathway name" value="ABC-family proteins mediated transport"/>
</dbReference>
<dbReference type="SignaLink" id="Q2M3G0"/>
<dbReference type="BioGRID-ORCS" id="340273">
    <property type="hits" value="13 hits in 1142 CRISPR screens"/>
</dbReference>
<dbReference type="ChiTaRS" id="ABCB5">
    <property type="organism name" value="human"/>
</dbReference>
<dbReference type="GeneWiki" id="ABCB5"/>
<dbReference type="GenomeRNAi" id="340273"/>
<dbReference type="Pharos" id="Q2M3G0">
    <property type="development level" value="Tbio"/>
</dbReference>
<dbReference type="PRO" id="PR:Q2M3G0"/>
<dbReference type="Proteomes" id="UP000005640">
    <property type="component" value="Chromosome 7"/>
</dbReference>
<dbReference type="RNAct" id="Q2M3G0">
    <property type="molecule type" value="protein"/>
</dbReference>
<dbReference type="Bgee" id="ENSG00000004846">
    <property type="expression patterns" value="Expressed in cauda epididymis and 81 other cell types or tissues"/>
</dbReference>
<dbReference type="ExpressionAtlas" id="Q2M3G0">
    <property type="expression patterns" value="baseline and differential"/>
</dbReference>
<dbReference type="GO" id="GO:0016324">
    <property type="term" value="C:apical plasma membrane"/>
    <property type="evidence" value="ECO:0000318"/>
    <property type="project" value="GO_Central"/>
</dbReference>
<dbReference type="GO" id="GO:0005886">
    <property type="term" value="C:plasma membrane"/>
    <property type="evidence" value="ECO:0000314"/>
    <property type="project" value="UniProtKB"/>
</dbReference>
<dbReference type="GO" id="GO:0008559">
    <property type="term" value="F:ABC-type xenobiotic transporter activity"/>
    <property type="evidence" value="ECO:0007669"/>
    <property type="project" value="UniProtKB-EC"/>
</dbReference>
<dbReference type="GO" id="GO:0005524">
    <property type="term" value="F:ATP binding"/>
    <property type="evidence" value="ECO:0007669"/>
    <property type="project" value="UniProtKB-KW"/>
</dbReference>
<dbReference type="GO" id="GO:0016887">
    <property type="term" value="F:ATP hydrolysis activity"/>
    <property type="evidence" value="ECO:0007669"/>
    <property type="project" value="InterPro"/>
</dbReference>
<dbReference type="GO" id="GO:0042626">
    <property type="term" value="F:ATPase-coupled transmembrane transporter activity"/>
    <property type="evidence" value="ECO:0000318"/>
    <property type="project" value="GO_Central"/>
</dbReference>
<dbReference type="GO" id="GO:0015562">
    <property type="term" value="F:efflux transmembrane transporter activity"/>
    <property type="evidence" value="ECO:0000314"/>
    <property type="project" value="UniProtKB"/>
</dbReference>
<dbReference type="GO" id="GO:0030154">
    <property type="term" value="P:cell differentiation"/>
    <property type="evidence" value="ECO:0007669"/>
    <property type="project" value="UniProtKB-KW"/>
</dbReference>
<dbReference type="GO" id="GO:0001654">
    <property type="term" value="P:eye development"/>
    <property type="evidence" value="ECO:0000250"/>
    <property type="project" value="UniProtKB"/>
</dbReference>
<dbReference type="GO" id="GO:0042391">
    <property type="term" value="P:regulation of membrane potential"/>
    <property type="evidence" value="ECO:0000314"/>
    <property type="project" value="UniProtKB"/>
</dbReference>
<dbReference type="GO" id="GO:0055085">
    <property type="term" value="P:transmembrane transport"/>
    <property type="evidence" value="ECO:0000314"/>
    <property type="project" value="UniProtKB"/>
</dbReference>
<dbReference type="CDD" id="cd18577">
    <property type="entry name" value="ABC_6TM_Pgp_ABCB1_D1_like"/>
    <property type="match status" value="1"/>
</dbReference>
<dbReference type="CDD" id="cd18578">
    <property type="entry name" value="ABC_6TM_Pgp_ABCB1_D2_like"/>
    <property type="match status" value="1"/>
</dbReference>
<dbReference type="CDD" id="cd03249">
    <property type="entry name" value="ABC_MTABC3_MDL1_MDL2"/>
    <property type="match status" value="2"/>
</dbReference>
<dbReference type="FunFam" id="1.20.1560.10:FF:000018">
    <property type="entry name" value="ATP-binding cassette subfamily B member 11"/>
    <property type="match status" value="1"/>
</dbReference>
<dbReference type="FunFam" id="1.20.1560.10:FF:000046">
    <property type="entry name" value="ATP-binding cassette subfamily B member 11"/>
    <property type="match status" value="1"/>
</dbReference>
<dbReference type="FunFam" id="3.40.50.300:FF:000302">
    <property type="entry name" value="ATP-binding cassette subfamily B member 5"/>
    <property type="match status" value="2"/>
</dbReference>
<dbReference type="Gene3D" id="1.20.1560.10">
    <property type="entry name" value="ABC transporter type 1, transmembrane domain"/>
    <property type="match status" value="1"/>
</dbReference>
<dbReference type="Gene3D" id="3.40.50.300">
    <property type="entry name" value="P-loop containing nucleotide triphosphate hydrolases"/>
    <property type="match status" value="2"/>
</dbReference>
<dbReference type="InterPro" id="IPR003593">
    <property type="entry name" value="AAA+_ATPase"/>
</dbReference>
<dbReference type="InterPro" id="IPR011527">
    <property type="entry name" value="ABC1_TM_dom"/>
</dbReference>
<dbReference type="InterPro" id="IPR036640">
    <property type="entry name" value="ABC1_TM_sf"/>
</dbReference>
<dbReference type="InterPro" id="IPR003439">
    <property type="entry name" value="ABC_transporter-like_ATP-bd"/>
</dbReference>
<dbReference type="InterPro" id="IPR017871">
    <property type="entry name" value="ABC_transporter-like_CS"/>
</dbReference>
<dbReference type="InterPro" id="IPR027417">
    <property type="entry name" value="P-loop_NTPase"/>
</dbReference>
<dbReference type="InterPro" id="IPR039421">
    <property type="entry name" value="Type_1_exporter"/>
</dbReference>
<dbReference type="PANTHER" id="PTHR43394">
    <property type="entry name" value="ATP-DEPENDENT PERMEASE MDL1, MITOCHONDRIAL"/>
    <property type="match status" value="1"/>
</dbReference>
<dbReference type="PANTHER" id="PTHR43394:SF27">
    <property type="entry name" value="ATP-DEPENDENT TRANSLOCASE ABCB1-LIKE"/>
    <property type="match status" value="1"/>
</dbReference>
<dbReference type="Pfam" id="PF00664">
    <property type="entry name" value="ABC_membrane"/>
    <property type="match status" value="2"/>
</dbReference>
<dbReference type="Pfam" id="PF00005">
    <property type="entry name" value="ABC_tran"/>
    <property type="match status" value="2"/>
</dbReference>
<dbReference type="SMART" id="SM00382">
    <property type="entry name" value="AAA"/>
    <property type="match status" value="2"/>
</dbReference>
<dbReference type="SUPFAM" id="SSF90123">
    <property type="entry name" value="ABC transporter transmembrane region"/>
    <property type="match status" value="2"/>
</dbReference>
<dbReference type="SUPFAM" id="SSF52540">
    <property type="entry name" value="P-loop containing nucleoside triphosphate hydrolases"/>
    <property type="match status" value="2"/>
</dbReference>
<dbReference type="PROSITE" id="PS50929">
    <property type="entry name" value="ABC_TM1F"/>
    <property type="match status" value="2"/>
</dbReference>
<dbReference type="PROSITE" id="PS00211">
    <property type="entry name" value="ABC_TRANSPORTER_1"/>
    <property type="match status" value="2"/>
</dbReference>
<dbReference type="PROSITE" id="PS50893">
    <property type="entry name" value="ABC_TRANSPORTER_2"/>
    <property type="match status" value="2"/>
</dbReference>
<organism>
    <name type="scientific">Homo sapiens</name>
    <name type="common">Human</name>
    <dbReference type="NCBI Taxonomy" id="9606"/>
    <lineage>
        <taxon>Eukaryota</taxon>
        <taxon>Metazoa</taxon>
        <taxon>Chordata</taxon>
        <taxon>Craniata</taxon>
        <taxon>Vertebrata</taxon>
        <taxon>Euteleostomi</taxon>
        <taxon>Mammalia</taxon>
        <taxon>Eutheria</taxon>
        <taxon>Euarchontoglires</taxon>
        <taxon>Primates</taxon>
        <taxon>Haplorrhini</taxon>
        <taxon>Catarrhini</taxon>
        <taxon>Hominidae</taxon>
        <taxon>Homo</taxon>
    </lineage>
</organism>